<proteinExistence type="inferred from homology"/>
<organism>
    <name type="scientific">Pectobacterium carotovorum subsp. carotovorum (strain PC1)</name>
    <dbReference type="NCBI Taxonomy" id="561230"/>
    <lineage>
        <taxon>Bacteria</taxon>
        <taxon>Pseudomonadati</taxon>
        <taxon>Pseudomonadota</taxon>
        <taxon>Gammaproteobacteria</taxon>
        <taxon>Enterobacterales</taxon>
        <taxon>Pectobacteriaceae</taxon>
        <taxon>Pectobacterium</taxon>
    </lineage>
</organism>
<comment type="function">
    <text evidence="1">Catalyzes the interconversion of 2-phosphoglycerate and 3-phosphoglycerate.</text>
</comment>
<comment type="catalytic activity">
    <reaction evidence="1">
        <text>(2R)-2-phosphoglycerate = (2R)-3-phosphoglycerate</text>
        <dbReference type="Rhea" id="RHEA:15901"/>
        <dbReference type="ChEBI" id="CHEBI:58272"/>
        <dbReference type="ChEBI" id="CHEBI:58289"/>
        <dbReference type="EC" id="5.4.2.11"/>
    </reaction>
</comment>
<comment type="pathway">
    <text evidence="1">Carbohydrate degradation; glycolysis; pyruvate from D-glyceraldehyde 3-phosphate: step 3/5.</text>
</comment>
<comment type="subunit">
    <text evidence="1">Homodimer.</text>
</comment>
<comment type="similarity">
    <text evidence="1">Belongs to the phosphoglycerate mutase family. BPG-dependent PGAM subfamily.</text>
</comment>
<reference key="1">
    <citation type="submission" date="2009-07" db="EMBL/GenBank/DDBJ databases">
        <title>Complete sequence of Pectobacterium carotovorum subsp. carotovorum PC1.</title>
        <authorList>
            <consortium name="US DOE Joint Genome Institute"/>
            <person name="Lucas S."/>
            <person name="Copeland A."/>
            <person name="Lapidus A."/>
            <person name="Glavina del Rio T."/>
            <person name="Tice H."/>
            <person name="Bruce D."/>
            <person name="Goodwin L."/>
            <person name="Pitluck S."/>
            <person name="Munk A.C."/>
            <person name="Brettin T."/>
            <person name="Detter J.C."/>
            <person name="Han C."/>
            <person name="Tapia R."/>
            <person name="Larimer F."/>
            <person name="Land M."/>
            <person name="Hauser L."/>
            <person name="Kyrpides N."/>
            <person name="Mikhailova N."/>
            <person name="Balakrishnan V."/>
            <person name="Glasner J."/>
            <person name="Perna N.T."/>
        </authorList>
    </citation>
    <scope>NUCLEOTIDE SEQUENCE [LARGE SCALE GENOMIC DNA]</scope>
    <source>
        <strain>PC1</strain>
    </source>
</reference>
<feature type="chain" id="PRO_1000213393" description="2,3-bisphosphoglycerate-dependent phosphoglycerate mutase">
    <location>
        <begin position="1"/>
        <end position="250"/>
    </location>
</feature>
<feature type="active site" description="Tele-phosphohistidine intermediate" evidence="1">
    <location>
        <position position="11"/>
    </location>
</feature>
<feature type="active site" description="Proton donor/acceptor" evidence="1">
    <location>
        <position position="89"/>
    </location>
</feature>
<feature type="binding site" evidence="1">
    <location>
        <begin position="10"/>
        <end position="17"/>
    </location>
    <ligand>
        <name>substrate</name>
    </ligand>
</feature>
<feature type="binding site" evidence="1">
    <location>
        <begin position="23"/>
        <end position="24"/>
    </location>
    <ligand>
        <name>substrate</name>
    </ligand>
</feature>
<feature type="binding site" evidence="1">
    <location>
        <position position="62"/>
    </location>
    <ligand>
        <name>substrate</name>
    </ligand>
</feature>
<feature type="binding site" evidence="1">
    <location>
        <begin position="89"/>
        <end position="92"/>
    </location>
    <ligand>
        <name>substrate</name>
    </ligand>
</feature>
<feature type="binding site" evidence="1">
    <location>
        <position position="100"/>
    </location>
    <ligand>
        <name>substrate</name>
    </ligand>
</feature>
<feature type="binding site" evidence="1">
    <location>
        <begin position="116"/>
        <end position="117"/>
    </location>
    <ligand>
        <name>substrate</name>
    </ligand>
</feature>
<feature type="binding site" evidence="1">
    <location>
        <begin position="185"/>
        <end position="186"/>
    </location>
    <ligand>
        <name>substrate</name>
    </ligand>
</feature>
<feature type="site" description="Transition state stabilizer" evidence="1">
    <location>
        <position position="184"/>
    </location>
</feature>
<sequence>MAVTKLVLVRHGESQWNNENRFTGWYDVDLSDKGRSEAKAAGQLLKDEGFAFDFAYTSVLKRAIHTLWNVLDELDQAWLPVEKSWKLNERHYGALQGLNKAETAEKYGDEQVKQWRRGFAITPPELTRDDERFPGHDPRYASLSDKELPLTESLALTIERVVPYWNETILPRIKSGERVIIAAHGNSLRALVKYLDNMGEDEILELNIPTGVPLVYEFDENFKPIKRYYLGNADEIAAKAAAVANQGKAK</sequence>
<dbReference type="EC" id="5.4.2.11" evidence="1"/>
<dbReference type="EMBL" id="CP001657">
    <property type="protein sequence ID" value="ACT12306.1"/>
    <property type="molecule type" value="Genomic_DNA"/>
</dbReference>
<dbReference type="RefSeq" id="WP_015839535.1">
    <property type="nucleotide sequence ID" value="NC_012917.1"/>
</dbReference>
<dbReference type="SMR" id="C6DCF6"/>
<dbReference type="STRING" id="561230.PC1_1258"/>
<dbReference type="GeneID" id="67794967"/>
<dbReference type="KEGG" id="pct:PC1_1258"/>
<dbReference type="eggNOG" id="COG0588">
    <property type="taxonomic scope" value="Bacteria"/>
</dbReference>
<dbReference type="HOGENOM" id="CLU_033323_1_1_6"/>
<dbReference type="OrthoDB" id="9781415at2"/>
<dbReference type="UniPathway" id="UPA00109">
    <property type="reaction ID" value="UER00186"/>
</dbReference>
<dbReference type="Proteomes" id="UP000002736">
    <property type="component" value="Chromosome"/>
</dbReference>
<dbReference type="GO" id="GO:0004619">
    <property type="term" value="F:phosphoglycerate mutase activity"/>
    <property type="evidence" value="ECO:0007669"/>
    <property type="project" value="UniProtKB-EC"/>
</dbReference>
<dbReference type="GO" id="GO:0006094">
    <property type="term" value="P:gluconeogenesis"/>
    <property type="evidence" value="ECO:0007669"/>
    <property type="project" value="UniProtKB-UniRule"/>
</dbReference>
<dbReference type="GO" id="GO:0006096">
    <property type="term" value="P:glycolytic process"/>
    <property type="evidence" value="ECO:0007669"/>
    <property type="project" value="UniProtKB-UniRule"/>
</dbReference>
<dbReference type="CDD" id="cd07067">
    <property type="entry name" value="HP_PGM_like"/>
    <property type="match status" value="1"/>
</dbReference>
<dbReference type="FunFam" id="3.40.50.1240:FF:000003">
    <property type="entry name" value="2,3-bisphosphoglycerate-dependent phosphoglycerate mutase"/>
    <property type="match status" value="1"/>
</dbReference>
<dbReference type="Gene3D" id="3.40.50.1240">
    <property type="entry name" value="Phosphoglycerate mutase-like"/>
    <property type="match status" value="1"/>
</dbReference>
<dbReference type="HAMAP" id="MF_01039">
    <property type="entry name" value="PGAM_GpmA"/>
    <property type="match status" value="1"/>
</dbReference>
<dbReference type="InterPro" id="IPR013078">
    <property type="entry name" value="His_Pase_superF_clade-1"/>
</dbReference>
<dbReference type="InterPro" id="IPR029033">
    <property type="entry name" value="His_PPase_superfam"/>
</dbReference>
<dbReference type="InterPro" id="IPR001345">
    <property type="entry name" value="PG/BPGM_mutase_AS"/>
</dbReference>
<dbReference type="InterPro" id="IPR005952">
    <property type="entry name" value="Phosphogly_mut1"/>
</dbReference>
<dbReference type="NCBIfam" id="TIGR01258">
    <property type="entry name" value="pgm_1"/>
    <property type="match status" value="1"/>
</dbReference>
<dbReference type="NCBIfam" id="NF010713">
    <property type="entry name" value="PRK14115.1"/>
    <property type="match status" value="1"/>
</dbReference>
<dbReference type="PANTHER" id="PTHR11931">
    <property type="entry name" value="PHOSPHOGLYCERATE MUTASE"/>
    <property type="match status" value="1"/>
</dbReference>
<dbReference type="Pfam" id="PF00300">
    <property type="entry name" value="His_Phos_1"/>
    <property type="match status" value="1"/>
</dbReference>
<dbReference type="PIRSF" id="PIRSF000709">
    <property type="entry name" value="6PFK_2-Ptase"/>
    <property type="match status" value="1"/>
</dbReference>
<dbReference type="SMART" id="SM00855">
    <property type="entry name" value="PGAM"/>
    <property type="match status" value="1"/>
</dbReference>
<dbReference type="SUPFAM" id="SSF53254">
    <property type="entry name" value="Phosphoglycerate mutase-like"/>
    <property type="match status" value="1"/>
</dbReference>
<dbReference type="PROSITE" id="PS00175">
    <property type="entry name" value="PG_MUTASE"/>
    <property type="match status" value="1"/>
</dbReference>
<accession>C6DCF6</accession>
<name>GPMA_PECCP</name>
<gene>
    <name evidence="1" type="primary">gpmA</name>
    <name type="ordered locus">PC1_1258</name>
</gene>
<evidence type="ECO:0000255" key="1">
    <source>
        <dbReference type="HAMAP-Rule" id="MF_01039"/>
    </source>
</evidence>
<keyword id="KW-0312">Gluconeogenesis</keyword>
<keyword id="KW-0324">Glycolysis</keyword>
<keyword id="KW-0413">Isomerase</keyword>
<protein>
    <recommendedName>
        <fullName evidence="1">2,3-bisphosphoglycerate-dependent phosphoglycerate mutase</fullName>
        <shortName evidence="1">BPG-dependent PGAM</shortName>
        <shortName evidence="1">PGAM</shortName>
        <shortName evidence="1">Phosphoglyceromutase</shortName>
        <shortName evidence="1">dPGM</shortName>
        <ecNumber evidence="1">5.4.2.11</ecNumber>
    </recommendedName>
</protein>